<name>KGUA_SALTY</name>
<sequence length="207" mass="23499">MAQGTLYIVSAPSGAGKSSLIQALLKTQPLYDTQVSVSHTTRAPRPGEVHGEHYFFVNHDEFKTMIGREAFLEHAEVFGNYYGTSRETIEQVLATGVDVFLDIDWQGAQQIREKMPQARSIFILPPSKIELDRRLRGRGQDSEEVIAKRMAQAVAEMSHYAEYDYLIVNDDFDTALSDLKTIIRAERLRMSRQKQRHNALISKLLAD</sequence>
<proteinExistence type="inferred from homology"/>
<evidence type="ECO:0000250" key="1"/>
<evidence type="ECO:0000269" key="2">
    <source>
    </source>
</evidence>
<evidence type="ECO:0000305" key="3"/>
<protein>
    <recommendedName>
        <fullName>Guanylate kinase</fullName>
        <ecNumber>2.7.4.8</ecNumber>
    </recommendedName>
    <alternativeName>
        <fullName>GMP kinase</fullName>
    </alternativeName>
</protein>
<reference key="1">
    <citation type="journal article" date="2003" name="J. Bacteriol.">
        <title>A mutation in the essential gene gmk (encoding guanylate kinase) generates a requirement for adenine at low temperature in Salmonella enterica.</title>
        <authorList>
            <person name="Beck B.J."/>
            <person name="Huelsmeyer M."/>
            <person name="Paul S."/>
            <person name="Downs D.M."/>
        </authorList>
    </citation>
    <scope>NUCLEOTIDE SEQUENCE [GENOMIC DNA]</scope>
    <scope>FUNCTION</scope>
    <source>
        <strain>LT2</strain>
    </source>
</reference>
<reference key="2">
    <citation type="journal article" date="2001" name="Nature">
        <title>Complete genome sequence of Salmonella enterica serovar Typhimurium LT2.</title>
        <authorList>
            <person name="McClelland M."/>
            <person name="Sanderson K.E."/>
            <person name="Spieth J."/>
            <person name="Clifton S.W."/>
            <person name="Latreille P."/>
            <person name="Courtney L."/>
            <person name="Porwollik S."/>
            <person name="Ali J."/>
            <person name="Dante M."/>
            <person name="Du F."/>
            <person name="Hou S."/>
            <person name="Layman D."/>
            <person name="Leonard S."/>
            <person name="Nguyen C."/>
            <person name="Scott K."/>
            <person name="Holmes A."/>
            <person name="Grewal N."/>
            <person name="Mulvaney E."/>
            <person name="Ryan E."/>
            <person name="Sun H."/>
            <person name="Florea L."/>
            <person name="Miller W."/>
            <person name="Stoneking T."/>
            <person name="Nhan M."/>
            <person name="Waterston R."/>
            <person name="Wilson R.K."/>
        </authorList>
    </citation>
    <scope>NUCLEOTIDE SEQUENCE [LARGE SCALE GENOMIC DNA]</scope>
    <source>
        <strain>LT2 / SGSC1412 / ATCC 700720</strain>
    </source>
</reference>
<keyword id="KW-0067">ATP-binding</keyword>
<keyword id="KW-0963">Cytoplasm</keyword>
<keyword id="KW-0418">Kinase</keyword>
<keyword id="KW-0547">Nucleotide-binding</keyword>
<keyword id="KW-1185">Reference proteome</keyword>
<keyword id="KW-0808">Transferase</keyword>
<organism>
    <name type="scientific">Salmonella typhimurium (strain LT2 / SGSC1412 / ATCC 700720)</name>
    <dbReference type="NCBI Taxonomy" id="99287"/>
    <lineage>
        <taxon>Bacteria</taxon>
        <taxon>Pseudomonadati</taxon>
        <taxon>Pseudomonadota</taxon>
        <taxon>Gammaproteobacteria</taxon>
        <taxon>Enterobacterales</taxon>
        <taxon>Enterobacteriaceae</taxon>
        <taxon>Salmonella</taxon>
    </lineage>
</organism>
<accession>Q9X6M5</accession>
<dbReference type="EC" id="2.7.4.8"/>
<dbReference type="EMBL" id="AF140283">
    <property type="protein sequence ID" value="AAD31506.1"/>
    <property type="molecule type" value="Genomic_DNA"/>
</dbReference>
<dbReference type="EMBL" id="AE006468">
    <property type="protein sequence ID" value="AAL22599.1"/>
    <property type="molecule type" value="Genomic_DNA"/>
</dbReference>
<dbReference type="RefSeq" id="NP_462640.1">
    <property type="nucleotide sequence ID" value="NC_003197.2"/>
</dbReference>
<dbReference type="RefSeq" id="WP_000046969.1">
    <property type="nucleotide sequence ID" value="NC_003197.2"/>
</dbReference>
<dbReference type="SMR" id="Q9X6M5"/>
<dbReference type="STRING" id="99287.STM3740"/>
<dbReference type="PaxDb" id="99287-STM3740"/>
<dbReference type="GeneID" id="1255264"/>
<dbReference type="KEGG" id="stm:STM3740"/>
<dbReference type="PATRIC" id="fig|99287.12.peg.3957"/>
<dbReference type="HOGENOM" id="CLU_001715_1_0_6"/>
<dbReference type="OMA" id="EWAVVHG"/>
<dbReference type="PhylomeDB" id="Q9X6M5"/>
<dbReference type="BioCyc" id="SENT99287:STM3740-MONOMER"/>
<dbReference type="Proteomes" id="UP000001014">
    <property type="component" value="Chromosome"/>
</dbReference>
<dbReference type="GO" id="GO:0005829">
    <property type="term" value="C:cytosol"/>
    <property type="evidence" value="ECO:0000318"/>
    <property type="project" value="GO_Central"/>
</dbReference>
<dbReference type="GO" id="GO:0005524">
    <property type="term" value="F:ATP binding"/>
    <property type="evidence" value="ECO:0007669"/>
    <property type="project" value="UniProtKB-UniRule"/>
</dbReference>
<dbReference type="GO" id="GO:0004385">
    <property type="term" value="F:guanylate kinase activity"/>
    <property type="evidence" value="ECO:0000318"/>
    <property type="project" value="GO_Central"/>
</dbReference>
<dbReference type="CDD" id="cd00071">
    <property type="entry name" value="GMPK"/>
    <property type="match status" value="1"/>
</dbReference>
<dbReference type="FunFam" id="3.40.50.300:FF:000084">
    <property type="entry name" value="Guanylate kinase"/>
    <property type="match status" value="1"/>
</dbReference>
<dbReference type="FunFam" id="3.30.63.10:FF:000002">
    <property type="entry name" value="Guanylate kinase 1"/>
    <property type="match status" value="1"/>
</dbReference>
<dbReference type="Gene3D" id="3.30.63.10">
    <property type="entry name" value="Guanylate Kinase phosphate binding domain"/>
    <property type="match status" value="1"/>
</dbReference>
<dbReference type="Gene3D" id="3.40.50.300">
    <property type="entry name" value="P-loop containing nucleotide triphosphate hydrolases"/>
    <property type="match status" value="1"/>
</dbReference>
<dbReference type="HAMAP" id="MF_00328">
    <property type="entry name" value="Guanylate_kinase"/>
    <property type="match status" value="1"/>
</dbReference>
<dbReference type="InterPro" id="IPR008145">
    <property type="entry name" value="GK/Ca_channel_bsu"/>
</dbReference>
<dbReference type="InterPro" id="IPR008144">
    <property type="entry name" value="Guanylate_kin-like_dom"/>
</dbReference>
<dbReference type="InterPro" id="IPR017665">
    <property type="entry name" value="Guanylate_kinase"/>
</dbReference>
<dbReference type="InterPro" id="IPR020590">
    <property type="entry name" value="Guanylate_kinase_CS"/>
</dbReference>
<dbReference type="InterPro" id="IPR027417">
    <property type="entry name" value="P-loop_NTPase"/>
</dbReference>
<dbReference type="NCBIfam" id="TIGR03263">
    <property type="entry name" value="guanyl_kin"/>
    <property type="match status" value="1"/>
</dbReference>
<dbReference type="PANTHER" id="PTHR23117:SF13">
    <property type="entry name" value="GUANYLATE KINASE"/>
    <property type="match status" value="1"/>
</dbReference>
<dbReference type="PANTHER" id="PTHR23117">
    <property type="entry name" value="GUANYLATE KINASE-RELATED"/>
    <property type="match status" value="1"/>
</dbReference>
<dbReference type="Pfam" id="PF00625">
    <property type="entry name" value="Guanylate_kin"/>
    <property type="match status" value="1"/>
</dbReference>
<dbReference type="SMART" id="SM00072">
    <property type="entry name" value="GuKc"/>
    <property type="match status" value="1"/>
</dbReference>
<dbReference type="SUPFAM" id="SSF52540">
    <property type="entry name" value="P-loop containing nucleoside triphosphate hydrolases"/>
    <property type="match status" value="1"/>
</dbReference>
<dbReference type="PROSITE" id="PS00856">
    <property type="entry name" value="GUANYLATE_KINASE_1"/>
    <property type="match status" value="1"/>
</dbReference>
<dbReference type="PROSITE" id="PS50052">
    <property type="entry name" value="GUANYLATE_KINASE_2"/>
    <property type="match status" value="1"/>
</dbReference>
<comment type="function">
    <text evidence="2">Essential for recycling GMP and indirectly, cGMP.</text>
</comment>
<comment type="catalytic activity">
    <reaction>
        <text>GMP + ATP = GDP + ADP</text>
        <dbReference type="Rhea" id="RHEA:20780"/>
        <dbReference type="ChEBI" id="CHEBI:30616"/>
        <dbReference type="ChEBI" id="CHEBI:58115"/>
        <dbReference type="ChEBI" id="CHEBI:58189"/>
        <dbReference type="ChEBI" id="CHEBI:456216"/>
        <dbReference type="EC" id="2.7.4.8"/>
    </reaction>
</comment>
<comment type="subcellular location">
    <subcellularLocation>
        <location evidence="1">Cytoplasm</location>
    </subcellularLocation>
</comment>
<comment type="similarity">
    <text evidence="3">Belongs to the guanylate kinase family.</text>
</comment>
<gene>
    <name type="primary">gmk</name>
    <name type="ordered locus">STM3740</name>
</gene>
<feature type="chain" id="PRO_0000170599" description="Guanylate kinase">
    <location>
        <begin position="1"/>
        <end position="207"/>
    </location>
</feature>
<feature type="domain" description="Guanylate kinase-like">
    <location>
        <begin position="4"/>
        <end position="184"/>
    </location>
</feature>
<feature type="binding site" evidence="1">
    <location>
        <begin position="11"/>
        <end position="18"/>
    </location>
    <ligand>
        <name>ATP</name>
        <dbReference type="ChEBI" id="CHEBI:30616"/>
    </ligand>
</feature>